<feature type="chain" id="PRO_0000075208" description="Alanine--tRNA ligase">
    <location>
        <begin position="1"/>
        <end position="876"/>
    </location>
</feature>
<feature type="binding site" evidence="1">
    <location>
        <position position="565"/>
    </location>
    <ligand>
        <name>Zn(2+)</name>
        <dbReference type="ChEBI" id="CHEBI:29105"/>
    </ligand>
</feature>
<feature type="binding site" evidence="1">
    <location>
        <position position="569"/>
    </location>
    <ligand>
        <name>Zn(2+)</name>
        <dbReference type="ChEBI" id="CHEBI:29105"/>
    </ligand>
</feature>
<feature type="binding site" evidence="1">
    <location>
        <position position="667"/>
    </location>
    <ligand>
        <name>Zn(2+)</name>
        <dbReference type="ChEBI" id="CHEBI:29105"/>
    </ligand>
</feature>
<feature type="binding site" evidence="1">
    <location>
        <position position="671"/>
    </location>
    <ligand>
        <name>Zn(2+)</name>
        <dbReference type="ChEBI" id="CHEBI:29105"/>
    </ligand>
</feature>
<comment type="function">
    <text evidence="1">Catalyzes the attachment of alanine to tRNA(Ala) in a two-step reaction: alanine is first activated by ATP to form Ala-AMP and then transferred to the acceptor end of tRNA(Ala). Also edits incorrectly charged Ser-tRNA(Ala) and Gly-tRNA(Ala) via its editing domain.</text>
</comment>
<comment type="catalytic activity">
    <reaction evidence="1">
        <text>tRNA(Ala) + L-alanine + ATP = L-alanyl-tRNA(Ala) + AMP + diphosphate</text>
        <dbReference type="Rhea" id="RHEA:12540"/>
        <dbReference type="Rhea" id="RHEA-COMP:9657"/>
        <dbReference type="Rhea" id="RHEA-COMP:9923"/>
        <dbReference type="ChEBI" id="CHEBI:30616"/>
        <dbReference type="ChEBI" id="CHEBI:33019"/>
        <dbReference type="ChEBI" id="CHEBI:57972"/>
        <dbReference type="ChEBI" id="CHEBI:78442"/>
        <dbReference type="ChEBI" id="CHEBI:78497"/>
        <dbReference type="ChEBI" id="CHEBI:456215"/>
        <dbReference type="EC" id="6.1.1.7"/>
    </reaction>
</comment>
<comment type="cofactor">
    <cofactor evidence="1">
        <name>Zn(2+)</name>
        <dbReference type="ChEBI" id="CHEBI:29105"/>
    </cofactor>
    <text evidence="1">Binds 1 zinc ion per subunit.</text>
</comment>
<comment type="subcellular location">
    <subcellularLocation>
        <location evidence="1">Cytoplasm</location>
    </subcellularLocation>
</comment>
<comment type="domain">
    <text evidence="1">Consists of three domains; the N-terminal catalytic domain, the editing domain and the C-terminal C-Ala domain. The editing domain removes incorrectly charged amino acids, while the C-Ala domain, along with tRNA(Ala), serves as a bridge to cooperatively bring together the editing and aminoacylation centers thus stimulating deacylation of misacylated tRNAs.</text>
</comment>
<comment type="similarity">
    <text evidence="1">Belongs to the class-II aminoacyl-tRNA synthetase family.</text>
</comment>
<name>SYA_STAEQ</name>
<keyword id="KW-0030">Aminoacyl-tRNA synthetase</keyword>
<keyword id="KW-0067">ATP-binding</keyword>
<keyword id="KW-0963">Cytoplasm</keyword>
<keyword id="KW-0436">Ligase</keyword>
<keyword id="KW-0479">Metal-binding</keyword>
<keyword id="KW-0547">Nucleotide-binding</keyword>
<keyword id="KW-0648">Protein biosynthesis</keyword>
<keyword id="KW-1185">Reference proteome</keyword>
<keyword id="KW-0694">RNA-binding</keyword>
<keyword id="KW-0820">tRNA-binding</keyword>
<keyword id="KW-0862">Zinc</keyword>
<reference key="1">
    <citation type="journal article" date="2005" name="J. Bacteriol.">
        <title>Insights on evolution of virulence and resistance from the complete genome analysis of an early methicillin-resistant Staphylococcus aureus strain and a biofilm-producing methicillin-resistant Staphylococcus epidermidis strain.</title>
        <authorList>
            <person name="Gill S.R."/>
            <person name="Fouts D.E."/>
            <person name="Archer G.L."/>
            <person name="Mongodin E.F."/>
            <person name="DeBoy R.T."/>
            <person name="Ravel J."/>
            <person name="Paulsen I.T."/>
            <person name="Kolonay J.F."/>
            <person name="Brinkac L.M."/>
            <person name="Beanan M.J."/>
            <person name="Dodson R.J."/>
            <person name="Daugherty S.C."/>
            <person name="Madupu R."/>
            <person name="Angiuoli S.V."/>
            <person name="Durkin A.S."/>
            <person name="Haft D.H."/>
            <person name="Vamathevan J.J."/>
            <person name="Khouri H."/>
            <person name="Utterback T.R."/>
            <person name="Lee C."/>
            <person name="Dimitrov G."/>
            <person name="Jiang L."/>
            <person name="Qin H."/>
            <person name="Weidman J."/>
            <person name="Tran K."/>
            <person name="Kang K.H."/>
            <person name="Hance I.R."/>
            <person name="Nelson K.E."/>
            <person name="Fraser C.M."/>
        </authorList>
    </citation>
    <scope>NUCLEOTIDE SEQUENCE [LARGE SCALE GENOMIC DNA]</scope>
    <source>
        <strain>ATCC 35984 / DSM 28319 / BCRC 17069 / CCUG 31568 / BM 3577 / RP62A</strain>
    </source>
</reference>
<gene>
    <name evidence="1" type="primary">alaS</name>
    <name type="ordered locus">SERP1182</name>
</gene>
<sequence>MKKMKASEIRQKYLDFFVEKGHMIEPSAPLVPIDDDSLLWINSGVATLKKYFDGRETPKKPRIVNSQKAIRTNDIENVGFTARHHTFFEMLGNFSIGDYFKHEAIEFAWEFLTSDKWMGMEPEKLYVTIHPEDTEAFRIWHEDIGLEESRIIRIEGNFWDIGEGPSGPNTEIFYDRGSAYGKDDPAEEMYPGGENERYLEVWNLVFSEFNHNKDNTYTPLPNKNIDTGMGLERMTSISQNVRTNYETDLFMPIIKEVEHVSGKKYLIDDAQDVAFKVIADHIRTISFAIADGALPANEGRGYVLRRLLRRAVRFSQSLGINEPFMYKLVDIVADIMEPYYPNVKDKSNFIKRVIKSEEERFHETLEEGLTILNELIKEAKNSDQVIKGHDAFKLYDTYGFPIELTEELATQENLSVDMPTFEQEMQQQRDRARQARQNSQSMQVQSEVLKNIQDESQFVGYETTDYQSLITHIIYNGEEVKHVEAGETIYFILRETPFYAVSGGQVADKGTVGNESFEINVTDVTKAPNGQNLHKGIVQFGEATQNAKVEARVNKEDRRLIQKNHSATHLLHAALKEVLGDHVNQAGSLVEPERLRFDFSHFGPMTQEEINLVERRVNEEIWRAIDVRIQEMSIEEAKSIGAMALFGEKYGDIVRVVNMAPFSIELCGGIHVNNTAEIGLFKIVSESGTGAGVRRIEALTGKGAFLHLEEIETQFNNIKNHLKVKSDNQVVEKVKQLQEEEKGLLKQLEQRNKEITSLKMGNIEEQVELINNLKVLATEVEIPNPKAIRSTMDDFKSKLQDTIIVLVGQVDGKVSVIATVPKSLTNQVKAGDLIKNMTPIIGGKGGGRPDMAQGGGTQPEKITEALRFIKDYIKNL</sequence>
<dbReference type="EC" id="6.1.1.7" evidence="1"/>
<dbReference type="EMBL" id="CP000029">
    <property type="protein sequence ID" value="AAW54547.1"/>
    <property type="molecule type" value="Genomic_DNA"/>
</dbReference>
<dbReference type="RefSeq" id="WP_002440135.1">
    <property type="nucleotide sequence ID" value="NC_002976.3"/>
</dbReference>
<dbReference type="SMR" id="Q5HNT2"/>
<dbReference type="STRING" id="176279.SERP1182"/>
<dbReference type="KEGG" id="ser:SERP1182"/>
<dbReference type="eggNOG" id="COG0013">
    <property type="taxonomic scope" value="Bacteria"/>
</dbReference>
<dbReference type="HOGENOM" id="CLU_004485_1_1_9"/>
<dbReference type="Proteomes" id="UP000000531">
    <property type="component" value="Chromosome"/>
</dbReference>
<dbReference type="GO" id="GO:0005829">
    <property type="term" value="C:cytosol"/>
    <property type="evidence" value="ECO:0007669"/>
    <property type="project" value="TreeGrafter"/>
</dbReference>
<dbReference type="GO" id="GO:0004813">
    <property type="term" value="F:alanine-tRNA ligase activity"/>
    <property type="evidence" value="ECO:0007669"/>
    <property type="project" value="UniProtKB-UniRule"/>
</dbReference>
<dbReference type="GO" id="GO:0002161">
    <property type="term" value="F:aminoacyl-tRNA deacylase activity"/>
    <property type="evidence" value="ECO:0007669"/>
    <property type="project" value="TreeGrafter"/>
</dbReference>
<dbReference type="GO" id="GO:0005524">
    <property type="term" value="F:ATP binding"/>
    <property type="evidence" value="ECO:0007669"/>
    <property type="project" value="UniProtKB-UniRule"/>
</dbReference>
<dbReference type="GO" id="GO:0140096">
    <property type="term" value="F:catalytic activity, acting on a protein"/>
    <property type="evidence" value="ECO:0007669"/>
    <property type="project" value="UniProtKB-ARBA"/>
</dbReference>
<dbReference type="GO" id="GO:0016740">
    <property type="term" value="F:transferase activity"/>
    <property type="evidence" value="ECO:0007669"/>
    <property type="project" value="UniProtKB-ARBA"/>
</dbReference>
<dbReference type="GO" id="GO:0000049">
    <property type="term" value="F:tRNA binding"/>
    <property type="evidence" value="ECO:0007669"/>
    <property type="project" value="UniProtKB-KW"/>
</dbReference>
<dbReference type="GO" id="GO:0008270">
    <property type="term" value="F:zinc ion binding"/>
    <property type="evidence" value="ECO:0007669"/>
    <property type="project" value="UniProtKB-UniRule"/>
</dbReference>
<dbReference type="GO" id="GO:0006419">
    <property type="term" value="P:alanyl-tRNA aminoacylation"/>
    <property type="evidence" value="ECO:0007669"/>
    <property type="project" value="UniProtKB-UniRule"/>
</dbReference>
<dbReference type="CDD" id="cd00673">
    <property type="entry name" value="AlaRS_core"/>
    <property type="match status" value="1"/>
</dbReference>
<dbReference type="FunFam" id="2.40.30.130:FF:000001">
    <property type="entry name" value="Alanine--tRNA ligase"/>
    <property type="match status" value="1"/>
</dbReference>
<dbReference type="FunFam" id="3.10.310.40:FF:000001">
    <property type="entry name" value="Alanine--tRNA ligase"/>
    <property type="match status" value="1"/>
</dbReference>
<dbReference type="FunFam" id="3.30.54.20:FF:000001">
    <property type="entry name" value="Alanine--tRNA ligase"/>
    <property type="match status" value="1"/>
</dbReference>
<dbReference type="FunFam" id="3.30.930.10:FF:000046">
    <property type="entry name" value="Alanine--tRNA ligase"/>
    <property type="match status" value="1"/>
</dbReference>
<dbReference type="FunFam" id="3.30.980.10:FF:000004">
    <property type="entry name" value="Alanine--tRNA ligase, cytoplasmic"/>
    <property type="match status" value="1"/>
</dbReference>
<dbReference type="Gene3D" id="2.40.30.130">
    <property type="match status" value="1"/>
</dbReference>
<dbReference type="Gene3D" id="3.10.310.40">
    <property type="match status" value="1"/>
</dbReference>
<dbReference type="Gene3D" id="3.30.54.20">
    <property type="match status" value="1"/>
</dbReference>
<dbReference type="Gene3D" id="3.30.930.10">
    <property type="entry name" value="Bira Bifunctional Protein, Domain 2"/>
    <property type="match status" value="1"/>
</dbReference>
<dbReference type="Gene3D" id="3.30.980.10">
    <property type="entry name" value="Threonyl-trna Synthetase, Chain A, domain 2"/>
    <property type="match status" value="1"/>
</dbReference>
<dbReference type="HAMAP" id="MF_00036_B">
    <property type="entry name" value="Ala_tRNA_synth_B"/>
    <property type="match status" value="1"/>
</dbReference>
<dbReference type="InterPro" id="IPR045864">
    <property type="entry name" value="aa-tRNA-synth_II/BPL/LPL"/>
</dbReference>
<dbReference type="InterPro" id="IPR002318">
    <property type="entry name" value="Ala-tRNA-lgiase_IIc"/>
</dbReference>
<dbReference type="InterPro" id="IPR018162">
    <property type="entry name" value="Ala-tRNA-ligase_IIc_anticod-bd"/>
</dbReference>
<dbReference type="InterPro" id="IPR018165">
    <property type="entry name" value="Ala-tRNA-synth_IIc_core"/>
</dbReference>
<dbReference type="InterPro" id="IPR018164">
    <property type="entry name" value="Ala-tRNA-synth_IIc_N"/>
</dbReference>
<dbReference type="InterPro" id="IPR050058">
    <property type="entry name" value="Ala-tRNA_ligase"/>
</dbReference>
<dbReference type="InterPro" id="IPR023033">
    <property type="entry name" value="Ala_tRNA_ligase_euk/bac"/>
</dbReference>
<dbReference type="InterPro" id="IPR003156">
    <property type="entry name" value="DHHA1_dom"/>
</dbReference>
<dbReference type="InterPro" id="IPR018163">
    <property type="entry name" value="Thr/Ala-tRNA-synth_IIc_edit"/>
</dbReference>
<dbReference type="InterPro" id="IPR009000">
    <property type="entry name" value="Transl_B-barrel_sf"/>
</dbReference>
<dbReference type="InterPro" id="IPR012947">
    <property type="entry name" value="tRNA_SAD"/>
</dbReference>
<dbReference type="NCBIfam" id="TIGR00344">
    <property type="entry name" value="alaS"/>
    <property type="match status" value="1"/>
</dbReference>
<dbReference type="PANTHER" id="PTHR11777:SF9">
    <property type="entry name" value="ALANINE--TRNA LIGASE, CYTOPLASMIC"/>
    <property type="match status" value="1"/>
</dbReference>
<dbReference type="PANTHER" id="PTHR11777">
    <property type="entry name" value="ALANYL-TRNA SYNTHETASE"/>
    <property type="match status" value="1"/>
</dbReference>
<dbReference type="Pfam" id="PF02272">
    <property type="entry name" value="DHHA1"/>
    <property type="match status" value="1"/>
</dbReference>
<dbReference type="Pfam" id="PF01411">
    <property type="entry name" value="tRNA-synt_2c"/>
    <property type="match status" value="1"/>
</dbReference>
<dbReference type="Pfam" id="PF07973">
    <property type="entry name" value="tRNA_SAD"/>
    <property type="match status" value="1"/>
</dbReference>
<dbReference type="PRINTS" id="PR00980">
    <property type="entry name" value="TRNASYNTHALA"/>
</dbReference>
<dbReference type="SMART" id="SM00863">
    <property type="entry name" value="tRNA_SAD"/>
    <property type="match status" value="1"/>
</dbReference>
<dbReference type="SUPFAM" id="SSF55681">
    <property type="entry name" value="Class II aaRS and biotin synthetases"/>
    <property type="match status" value="1"/>
</dbReference>
<dbReference type="SUPFAM" id="SSF101353">
    <property type="entry name" value="Putative anticodon-binding domain of alanyl-tRNA synthetase (AlaRS)"/>
    <property type="match status" value="1"/>
</dbReference>
<dbReference type="SUPFAM" id="SSF55186">
    <property type="entry name" value="ThrRS/AlaRS common domain"/>
    <property type="match status" value="1"/>
</dbReference>
<dbReference type="SUPFAM" id="SSF50447">
    <property type="entry name" value="Translation proteins"/>
    <property type="match status" value="1"/>
</dbReference>
<dbReference type="PROSITE" id="PS50860">
    <property type="entry name" value="AA_TRNA_LIGASE_II_ALA"/>
    <property type="match status" value="1"/>
</dbReference>
<protein>
    <recommendedName>
        <fullName evidence="1">Alanine--tRNA ligase</fullName>
        <ecNumber evidence="1">6.1.1.7</ecNumber>
    </recommendedName>
    <alternativeName>
        <fullName evidence="1">Alanyl-tRNA synthetase</fullName>
        <shortName evidence="1">AlaRS</shortName>
    </alternativeName>
</protein>
<proteinExistence type="inferred from homology"/>
<evidence type="ECO:0000255" key="1">
    <source>
        <dbReference type="HAMAP-Rule" id="MF_00036"/>
    </source>
</evidence>
<accession>Q5HNT2</accession>
<organism>
    <name type="scientific">Staphylococcus epidermidis (strain ATCC 35984 / DSM 28319 / BCRC 17069 / CCUG 31568 / BM 3577 / RP62A)</name>
    <dbReference type="NCBI Taxonomy" id="176279"/>
    <lineage>
        <taxon>Bacteria</taxon>
        <taxon>Bacillati</taxon>
        <taxon>Bacillota</taxon>
        <taxon>Bacilli</taxon>
        <taxon>Bacillales</taxon>
        <taxon>Staphylococcaceae</taxon>
        <taxon>Staphylococcus</taxon>
    </lineage>
</organism>